<proteinExistence type="inferred from homology"/>
<feature type="chain" id="PRO_0000209195" description="Protein SlyX homolog">
    <location>
        <begin position="1"/>
        <end position="70"/>
    </location>
</feature>
<gene>
    <name evidence="1" type="primary">slyX</name>
    <name type="ordered locus">Atu0119</name>
    <name type="ORF">AGR_C_187</name>
</gene>
<keyword id="KW-1185">Reference proteome</keyword>
<evidence type="ECO:0000255" key="1">
    <source>
        <dbReference type="HAMAP-Rule" id="MF_00715"/>
    </source>
</evidence>
<comment type="similarity">
    <text evidence="1">Belongs to the SlyX family.</text>
</comment>
<accession>Q8UJ19</accession>
<dbReference type="EMBL" id="AE007869">
    <property type="protein sequence ID" value="AAK85939.2"/>
    <property type="molecule type" value="Genomic_DNA"/>
</dbReference>
<dbReference type="PIR" id="AB2591">
    <property type="entry name" value="AB2591"/>
</dbReference>
<dbReference type="PIR" id="B97373">
    <property type="entry name" value="B97373"/>
</dbReference>
<dbReference type="RefSeq" id="NP_353154.2">
    <property type="nucleotide sequence ID" value="NC_003062.2"/>
</dbReference>
<dbReference type="RefSeq" id="WP_010970665.1">
    <property type="nucleotide sequence ID" value="NC_003062.2"/>
</dbReference>
<dbReference type="SMR" id="Q8UJ19"/>
<dbReference type="STRING" id="176299.Atu0119"/>
<dbReference type="EnsemblBacteria" id="AAK85939">
    <property type="protein sequence ID" value="AAK85939"/>
    <property type="gene ID" value="Atu0119"/>
</dbReference>
<dbReference type="GeneID" id="1132157"/>
<dbReference type="KEGG" id="atu:Atu0119"/>
<dbReference type="PATRIC" id="fig|176299.10.peg.111"/>
<dbReference type="eggNOG" id="COG2900">
    <property type="taxonomic scope" value="Bacteria"/>
</dbReference>
<dbReference type="HOGENOM" id="CLU_180796_5_0_5"/>
<dbReference type="OrthoDB" id="9803836at2"/>
<dbReference type="PhylomeDB" id="Q8UJ19"/>
<dbReference type="Proteomes" id="UP000000813">
    <property type="component" value="Chromosome circular"/>
</dbReference>
<dbReference type="Gene3D" id="1.20.5.300">
    <property type="match status" value="1"/>
</dbReference>
<dbReference type="HAMAP" id="MF_00715">
    <property type="entry name" value="SlyX"/>
    <property type="match status" value="1"/>
</dbReference>
<dbReference type="InterPro" id="IPR007236">
    <property type="entry name" value="SlyX"/>
</dbReference>
<dbReference type="NCBIfam" id="NF001962">
    <property type="entry name" value="PRK00736.1"/>
    <property type="match status" value="1"/>
</dbReference>
<dbReference type="Pfam" id="PF04102">
    <property type="entry name" value="SlyX"/>
    <property type="match status" value="1"/>
</dbReference>
<reference key="1">
    <citation type="journal article" date="2001" name="Science">
        <title>The genome of the natural genetic engineer Agrobacterium tumefaciens C58.</title>
        <authorList>
            <person name="Wood D.W."/>
            <person name="Setubal J.C."/>
            <person name="Kaul R."/>
            <person name="Monks D.E."/>
            <person name="Kitajima J.P."/>
            <person name="Okura V.K."/>
            <person name="Zhou Y."/>
            <person name="Chen L."/>
            <person name="Wood G.E."/>
            <person name="Almeida N.F. Jr."/>
            <person name="Woo L."/>
            <person name="Chen Y."/>
            <person name="Paulsen I.T."/>
            <person name="Eisen J.A."/>
            <person name="Karp P.D."/>
            <person name="Bovee D. Sr."/>
            <person name="Chapman P."/>
            <person name="Clendenning J."/>
            <person name="Deatherage G."/>
            <person name="Gillet W."/>
            <person name="Grant C."/>
            <person name="Kutyavin T."/>
            <person name="Levy R."/>
            <person name="Li M.-J."/>
            <person name="McClelland E."/>
            <person name="Palmieri A."/>
            <person name="Raymond C."/>
            <person name="Rouse G."/>
            <person name="Saenphimmachak C."/>
            <person name="Wu Z."/>
            <person name="Romero P."/>
            <person name="Gordon D."/>
            <person name="Zhang S."/>
            <person name="Yoo H."/>
            <person name="Tao Y."/>
            <person name="Biddle P."/>
            <person name="Jung M."/>
            <person name="Krespan W."/>
            <person name="Perry M."/>
            <person name="Gordon-Kamm B."/>
            <person name="Liao L."/>
            <person name="Kim S."/>
            <person name="Hendrick C."/>
            <person name="Zhao Z.-Y."/>
            <person name="Dolan M."/>
            <person name="Chumley F."/>
            <person name="Tingey S.V."/>
            <person name="Tomb J.-F."/>
            <person name="Gordon M.P."/>
            <person name="Olson M.V."/>
            <person name="Nester E.W."/>
        </authorList>
    </citation>
    <scope>NUCLEOTIDE SEQUENCE [LARGE SCALE GENOMIC DNA]</scope>
    <source>
        <strain>C58 / ATCC 33970</strain>
    </source>
</reference>
<reference key="2">
    <citation type="journal article" date="2001" name="Science">
        <title>Genome sequence of the plant pathogen and biotechnology agent Agrobacterium tumefaciens C58.</title>
        <authorList>
            <person name="Goodner B."/>
            <person name="Hinkle G."/>
            <person name="Gattung S."/>
            <person name="Miller N."/>
            <person name="Blanchard M."/>
            <person name="Qurollo B."/>
            <person name="Goldman B.S."/>
            <person name="Cao Y."/>
            <person name="Askenazi M."/>
            <person name="Halling C."/>
            <person name="Mullin L."/>
            <person name="Houmiel K."/>
            <person name="Gordon J."/>
            <person name="Vaudin M."/>
            <person name="Iartchouk O."/>
            <person name="Epp A."/>
            <person name="Liu F."/>
            <person name="Wollam C."/>
            <person name="Allinger M."/>
            <person name="Doughty D."/>
            <person name="Scott C."/>
            <person name="Lappas C."/>
            <person name="Markelz B."/>
            <person name="Flanagan C."/>
            <person name="Crowell C."/>
            <person name="Gurson J."/>
            <person name="Lomo C."/>
            <person name="Sear C."/>
            <person name="Strub G."/>
            <person name="Cielo C."/>
            <person name="Slater S."/>
        </authorList>
    </citation>
    <scope>NUCLEOTIDE SEQUENCE [LARGE SCALE GENOMIC DNA]</scope>
    <source>
        <strain>C58 / ATCC 33970</strain>
    </source>
</reference>
<sequence length="70" mass="8134">MTSETEKRIIALEETIAHQAKTIEELSDQLAEQWKVVEQTRAKLDRLTERFLSLEEQSLDAPAITRPPHY</sequence>
<protein>
    <recommendedName>
        <fullName evidence="1">Protein SlyX homolog</fullName>
    </recommendedName>
</protein>
<organism>
    <name type="scientific">Agrobacterium fabrum (strain C58 / ATCC 33970)</name>
    <name type="common">Agrobacterium tumefaciens (strain C58)</name>
    <dbReference type="NCBI Taxonomy" id="176299"/>
    <lineage>
        <taxon>Bacteria</taxon>
        <taxon>Pseudomonadati</taxon>
        <taxon>Pseudomonadota</taxon>
        <taxon>Alphaproteobacteria</taxon>
        <taxon>Hyphomicrobiales</taxon>
        <taxon>Rhizobiaceae</taxon>
        <taxon>Rhizobium/Agrobacterium group</taxon>
        <taxon>Agrobacterium</taxon>
        <taxon>Agrobacterium tumefaciens complex</taxon>
    </lineage>
</organism>
<name>SLYX_AGRFC</name>